<proteinExistence type="inferred from homology"/>
<feature type="chain" id="PRO_1000054609" description="Large ribosomal subunit protein uL16">
    <location>
        <begin position="1"/>
        <end position="147"/>
    </location>
</feature>
<dbReference type="EMBL" id="CP000382">
    <property type="protein sequence ID" value="ABK61480.1"/>
    <property type="molecule type" value="Genomic_DNA"/>
</dbReference>
<dbReference type="RefSeq" id="WP_011721222.1">
    <property type="nucleotide sequence ID" value="NC_008593.1"/>
</dbReference>
<dbReference type="SMR" id="A0PXV3"/>
<dbReference type="STRING" id="386415.NT01CX_1122"/>
<dbReference type="KEGG" id="cno:NT01CX_1122"/>
<dbReference type="eggNOG" id="COG0197">
    <property type="taxonomic scope" value="Bacteria"/>
</dbReference>
<dbReference type="HOGENOM" id="CLU_078858_2_1_9"/>
<dbReference type="Proteomes" id="UP000008220">
    <property type="component" value="Chromosome"/>
</dbReference>
<dbReference type="GO" id="GO:0022625">
    <property type="term" value="C:cytosolic large ribosomal subunit"/>
    <property type="evidence" value="ECO:0007669"/>
    <property type="project" value="TreeGrafter"/>
</dbReference>
<dbReference type="GO" id="GO:0019843">
    <property type="term" value="F:rRNA binding"/>
    <property type="evidence" value="ECO:0007669"/>
    <property type="project" value="UniProtKB-UniRule"/>
</dbReference>
<dbReference type="GO" id="GO:0003735">
    <property type="term" value="F:structural constituent of ribosome"/>
    <property type="evidence" value="ECO:0007669"/>
    <property type="project" value="InterPro"/>
</dbReference>
<dbReference type="GO" id="GO:0000049">
    <property type="term" value="F:tRNA binding"/>
    <property type="evidence" value="ECO:0007669"/>
    <property type="project" value="UniProtKB-KW"/>
</dbReference>
<dbReference type="GO" id="GO:0006412">
    <property type="term" value="P:translation"/>
    <property type="evidence" value="ECO:0007669"/>
    <property type="project" value="UniProtKB-UniRule"/>
</dbReference>
<dbReference type="CDD" id="cd01433">
    <property type="entry name" value="Ribosomal_L16_L10e"/>
    <property type="match status" value="1"/>
</dbReference>
<dbReference type="FunFam" id="3.90.1170.10:FF:000001">
    <property type="entry name" value="50S ribosomal protein L16"/>
    <property type="match status" value="1"/>
</dbReference>
<dbReference type="Gene3D" id="3.90.1170.10">
    <property type="entry name" value="Ribosomal protein L10e/L16"/>
    <property type="match status" value="1"/>
</dbReference>
<dbReference type="HAMAP" id="MF_01342">
    <property type="entry name" value="Ribosomal_uL16"/>
    <property type="match status" value="1"/>
</dbReference>
<dbReference type="InterPro" id="IPR047873">
    <property type="entry name" value="Ribosomal_uL16"/>
</dbReference>
<dbReference type="InterPro" id="IPR000114">
    <property type="entry name" value="Ribosomal_uL16_bact-type"/>
</dbReference>
<dbReference type="InterPro" id="IPR020798">
    <property type="entry name" value="Ribosomal_uL16_CS"/>
</dbReference>
<dbReference type="InterPro" id="IPR016180">
    <property type="entry name" value="Ribosomal_uL16_dom"/>
</dbReference>
<dbReference type="InterPro" id="IPR036920">
    <property type="entry name" value="Ribosomal_uL16_sf"/>
</dbReference>
<dbReference type="NCBIfam" id="TIGR01164">
    <property type="entry name" value="rplP_bact"/>
    <property type="match status" value="1"/>
</dbReference>
<dbReference type="PANTHER" id="PTHR12220">
    <property type="entry name" value="50S/60S RIBOSOMAL PROTEIN L16"/>
    <property type="match status" value="1"/>
</dbReference>
<dbReference type="PANTHER" id="PTHR12220:SF13">
    <property type="entry name" value="LARGE RIBOSOMAL SUBUNIT PROTEIN UL16M"/>
    <property type="match status" value="1"/>
</dbReference>
<dbReference type="Pfam" id="PF00252">
    <property type="entry name" value="Ribosomal_L16"/>
    <property type="match status" value="1"/>
</dbReference>
<dbReference type="PRINTS" id="PR00060">
    <property type="entry name" value="RIBOSOMALL16"/>
</dbReference>
<dbReference type="SUPFAM" id="SSF54686">
    <property type="entry name" value="Ribosomal protein L16p/L10e"/>
    <property type="match status" value="1"/>
</dbReference>
<dbReference type="PROSITE" id="PS00586">
    <property type="entry name" value="RIBOSOMAL_L16_1"/>
    <property type="match status" value="1"/>
</dbReference>
<dbReference type="PROSITE" id="PS00701">
    <property type="entry name" value="RIBOSOMAL_L16_2"/>
    <property type="match status" value="1"/>
</dbReference>
<comment type="function">
    <text evidence="1">Binds 23S rRNA and is also seen to make contacts with the A and possibly P site tRNAs.</text>
</comment>
<comment type="subunit">
    <text evidence="1">Part of the 50S ribosomal subunit.</text>
</comment>
<comment type="similarity">
    <text evidence="1">Belongs to the universal ribosomal protein uL16 family.</text>
</comment>
<protein>
    <recommendedName>
        <fullName evidence="1">Large ribosomal subunit protein uL16</fullName>
    </recommendedName>
    <alternativeName>
        <fullName evidence="2">50S ribosomal protein L16</fullName>
    </alternativeName>
</protein>
<gene>
    <name evidence="1" type="primary">rplP</name>
    <name type="ordered locus">NT01CX_1122</name>
</gene>
<evidence type="ECO:0000255" key="1">
    <source>
        <dbReference type="HAMAP-Rule" id="MF_01342"/>
    </source>
</evidence>
<evidence type="ECO:0000305" key="2"/>
<keyword id="KW-1185">Reference proteome</keyword>
<keyword id="KW-0687">Ribonucleoprotein</keyword>
<keyword id="KW-0689">Ribosomal protein</keyword>
<keyword id="KW-0694">RNA-binding</keyword>
<keyword id="KW-0699">rRNA-binding</keyword>
<keyword id="KW-0820">tRNA-binding</keyword>
<accession>A0PXV3</accession>
<name>RL16_CLONN</name>
<sequence length="147" mass="16535">MLMPKKVKHRKVQRGRMKGKATRGNFIAYGDYAIQATECGWLTSNQIEAARIAINRYIKRGGKLWIKVFPDKPVTEKPAETRMGSGKGSPEYWVAVVKPGRVLFELSGVPENVAREAMRLASHKLPMKTKFVTRKDFEQTGGEVNEG</sequence>
<organism>
    <name type="scientific">Clostridium novyi (strain NT)</name>
    <dbReference type="NCBI Taxonomy" id="386415"/>
    <lineage>
        <taxon>Bacteria</taxon>
        <taxon>Bacillati</taxon>
        <taxon>Bacillota</taxon>
        <taxon>Clostridia</taxon>
        <taxon>Eubacteriales</taxon>
        <taxon>Clostridiaceae</taxon>
        <taxon>Clostridium</taxon>
    </lineage>
</organism>
<reference key="1">
    <citation type="journal article" date="2006" name="Nat. Biotechnol.">
        <title>The genome and transcriptomes of the anti-tumor agent Clostridium novyi-NT.</title>
        <authorList>
            <person name="Bettegowda C."/>
            <person name="Huang X."/>
            <person name="Lin J."/>
            <person name="Cheong I."/>
            <person name="Kohli M."/>
            <person name="Szabo S.A."/>
            <person name="Zhang X."/>
            <person name="Diaz L.A. Jr."/>
            <person name="Velculescu V.E."/>
            <person name="Parmigiani G."/>
            <person name="Kinzler K.W."/>
            <person name="Vogelstein B."/>
            <person name="Zhou S."/>
        </authorList>
    </citation>
    <scope>NUCLEOTIDE SEQUENCE [LARGE SCALE GENOMIC DNA]</scope>
    <source>
        <strain>NT</strain>
    </source>
</reference>